<feature type="chain" id="PRO_0000438876" description="Midnolin">
    <location>
        <begin position="1"/>
        <end position="505"/>
    </location>
</feature>
<feature type="domain" description="Ubiquitin-like" evidence="3">
    <location>
        <begin position="32"/>
        <end position="106"/>
    </location>
</feature>
<feature type="region of interest" description="Disordered" evidence="4">
    <location>
        <begin position="155"/>
        <end position="176"/>
    </location>
</feature>
<feature type="region of interest" description="Disordered" evidence="4">
    <location>
        <begin position="228"/>
        <end position="305"/>
    </location>
</feature>
<feature type="region of interest" description="Disordered" evidence="4">
    <location>
        <begin position="440"/>
        <end position="485"/>
    </location>
</feature>
<feature type="compositionally biased region" description="Low complexity" evidence="4">
    <location>
        <begin position="238"/>
        <end position="262"/>
    </location>
</feature>
<feature type="compositionally biased region" description="Polar residues" evidence="4">
    <location>
        <begin position="263"/>
        <end position="282"/>
    </location>
</feature>
<feature type="compositionally biased region" description="Low complexity" evidence="4">
    <location>
        <begin position="283"/>
        <end position="300"/>
    </location>
</feature>
<reference evidence="8" key="1">
    <citation type="journal article" date="2004" name="Nature">
        <title>Genome sequence of the Brown Norway rat yields insights into mammalian evolution.</title>
        <authorList>
            <person name="Gibbs R.A."/>
            <person name="Weinstock G.M."/>
            <person name="Metzker M.L."/>
            <person name="Muzny D.M."/>
            <person name="Sodergren E.J."/>
            <person name="Scherer S."/>
            <person name="Scott G."/>
            <person name="Steffen D."/>
            <person name="Worley K.C."/>
            <person name="Burch P.E."/>
            <person name="Okwuonu G."/>
            <person name="Hines S."/>
            <person name="Lewis L."/>
            <person name="Deramo C."/>
            <person name="Delgado O."/>
            <person name="Dugan-Rocha S."/>
            <person name="Miner G."/>
            <person name="Morgan M."/>
            <person name="Hawes A."/>
            <person name="Gill R."/>
            <person name="Holt R.A."/>
            <person name="Adams M.D."/>
            <person name="Amanatides P.G."/>
            <person name="Baden-Tillson H."/>
            <person name="Barnstead M."/>
            <person name="Chin S."/>
            <person name="Evans C.A."/>
            <person name="Ferriera S."/>
            <person name="Fosler C."/>
            <person name="Glodek A."/>
            <person name="Gu Z."/>
            <person name="Jennings D."/>
            <person name="Kraft C.L."/>
            <person name="Nguyen T."/>
            <person name="Pfannkoch C.M."/>
            <person name="Sitter C."/>
            <person name="Sutton G.G."/>
            <person name="Venter J.C."/>
            <person name="Woodage T."/>
            <person name="Smith D."/>
            <person name="Lee H.-M."/>
            <person name="Gustafson E."/>
            <person name="Cahill P."/>
            <person name="Kana A."/>
            <person name="Doucette-Stamm L."/>
            <person name="Weinstock K."/>
            <person name="Fechtel K."/>
            <person name="Weiss R.B."/>
            <person name="Dunn D.M."/>
            <person name="Green E.D."/>
            <person name="Blakesley R.W."/>
            <person name="Bouffard G.G."/>
            <person name="De Jong P.J."/>
            <person name="Osoegawa K."/>
            <person name="Zhu B."/>
            <person name="Marra M."/>
            <person name="Schein J."/>
            <person name="Bosdet I."/>
            <person name="Fjell C."/>
            <person name="Jones S."/>
            <person name="Krzywinski M."/>
            <person name="Mathewson C."/>
            <person name="Siddiqui A."/>
            <person name="Wye N."/>
            <person name="McPherson J."/>
            <person name="Zhao S."/>
            <person name="Fraser C.M."/>
            <person name="Shetty J."/>
            <person name="Shatsman S."/>
            <person name="Geer K."/>
            <person name="Chen Y."/>
            <person name="Abramzon S."/>
            <person name="Nierman W.C."/>
            <person name="Havlak P.H."/>
            <person name="Chen R."/>
            <person name="Durbin K.J."/>
            <person name="Egan A."/>
            <person name="Ren Y."/>
            <person name="Song X.-Z."/>
            <person name="Li B."/>
            <person name="Liu Y."/>
            <person name="Qin X."/>
            <person name="Cawley S."/>
            <person name="Cooney A.J."/>
            <person name="D'Souza L.M."/>
            <person name="Martin K."/>
            <person name="Wu J.Q."/>
            <person name="Gonzalez-Garay M.L."/>
            <person name="Jackson A.R."/>
            <person name="Kalafus K.J."/>
            <person name="McLeod M.P."/>
            <person name="Milosavljevic A."/>
            <person name="Virk D."/>
            <person name="Volkov A."/>
            <person name="Wheeler D.A."/>
            <person name="Zhang Z."/>
            <person name="Bailey J.A."/>
            <person name="Eichler E.E."/>
            <person name="Tuzun E."/>
            <person name="Birney E."/>
            <person name="Mongin E."/>
            <person name="Ureta-Vidal A."/>
            <person name="Woodwark C."/>
            <person name="Zdobnov E."/>
            <person name="Bork P."/>
            <person name="Suyama M."/>
            <person name="Torrents D."/>
            <person name="Alexandersson M."/>
            <person name="Trask B.J."/>
            <person name="Young J.M."/>
            <person name="Huang H."/>
            <person name="Wang H."/>
            <person name="Xing H."/>
            <person name="Daniels S."/>
            <person name="Gietzen D."/>
            <person name="Schmidt J."/>
            <person name="Stevens K."/>
            <person name="Vitt U."/>
            <person name="Wingrove J."/>
            <person name="Camara F."/>
            <person name="Mar Alba M."/>
            <person name="Abril J.F."/>
            <person name="Guigo R."/>
            <person name="Smit A."/>
            <person name="Dubchak I."/>
            <person name="Rubin E.M."/>
            <person name="Couronne O."/>
            <person name="Poliakov A."/>
            <person name="Huebner N."/>
            <person name="Ganten D."/>
            <person name="Goesele C."/>
            <person name="Hummel O."/>
            <person name="Kreitler T."/>
            <person name="Lee Y.-A."/>
            <person name="Monti J."/>
            <person name="Schulz H."/>
            <person name="Zimdahl H."/>
            <person name="Himmelbauer H."/>
            <person name="Lehrach H."/>
            <person name="Jacob H.J."/>
            <person name="Bromberg S."/>
            <person name="Gullings-Handley J."/>
            <person name="Jensen-Seaman M.I."/>
            <person name="Kwitek A.E."/>
            <person name="Lazar J."/>
            <person name="Pasko D."/>
            <person name="Tonellato P.J."/>
            <person name="Twigger S."/>
            <person name="Ponting C.P."/>
            <person name="Duarte J.M."/>
            <person name="Rice S."/>
            <person name="Goodstadt L."/>
            <person name="Beatson S.A."/>
            <person name="Emes R.D."/>
            <person name="Winter E.E."/>
            <person name="Webber C."/>
            <person name="Brandt P."/>
            <person name="Nyakatura G."/>
            <person name="Adetobi M."/>
            <person name="Chiaromonte F."/>
            <person name="Elnitski L."/>
            <person name="Eswara P."/>
            <person name="Hardison R.C."/>
            <person name="Hou M."/>
            <person name="Kolbe D."/>
            <person name="Makova K."/>
            <person name="Miller W."/>
            <person name="Nekrutenko A."/>
            <person name="Riemer C."/>
            <person name="Schwartz S."/>
            <person name="Taylor J."/>
            <person name="Yang S."/>
            <person name="Zhang Y."/>
            <person name="Lindpaintner K."/>
            <person name="Andrews T.D."/>
            <person name="Caccamo M."/>
            <person name="Clamp M."/>
            <person name="Clarke L."/>
            <person name="Curwen V."/>
            <person name="Durbin R.M."/>
            <person name="Eyras E."/>
            <person name="Searle S.M."/>
            <person name="Cooper G.M."/>
            <person name="Batzoglou S."/>
            <person name="Brudno M."/>
            <person name="Sidow A."/>
            <person name="Stone E.A."/>
            <person name="Payseur B.A."/>
            <person name="Bourque G."/>
            <person name="Lopez-Otin C."/>
            <person name="Puente X.S."/>
            <person name="Chakrabarti K."/>
            <person name="Chatterji S."/>
            <person name="Dewey C."/>
            <person name="Pachter L."/>
            <person name="Bray N."/>
            <person name="Yap V.B."/>
            <person name="Caspi A."/>
            <person name="Tesler G."/>
            <person name="Pevzner P.A."/>
            <person name="Haussler D."/>
            <person name="Roskin K.M."/>
            <person name="Baertsch R."/>
            <person name="Clawson H."/>
            <person name="Furey T.S."/>
            <person name="Hinrichs A.S."/>
            <person name="Karolchik D."/>
            <person name="Kent W.J."/>
            <person name="Rosenbloom K.R."/>
            <person name="Trumbower H."/>
            <person name="Weirauch M."/>
            <person name="Cooper D.N."/>
            <person name="Stenson P.D."/>
            <person name="Ma B."/>
            <person name="Brent M."/>
            <person name="Arumugam M."/>
            <person name="Shteynberg D."/>
            <person name="Copley R.R."/>
            <person name="Taylor M.S."/>
            <person name="Riethman H."/>
            <person name="Mudunuri U."/>
            <person name="Peterson J."/>
            <person name="Guyer M."/>
            <person name="Felsenfeld A."/>
            <person name="Old S."/>
            <person name="Mockrin S."/>
            <person name="Collins F.S."/>
        </authorList>
    </citation>
    <scope>NUCLEOTIDE SEQUENCE [LARGE SCALE GENOMIC DNA]</scope>
    <source>
        <strain evidence="8">Brown Norway</strain>
    </source>
</reference>
<reference evidence="7" key="2">
    <citation type="journal article" date="2013" name="J. Biol. Chem.">
        <title>Identification of the ubiquitin-like domain of midnolin as a new glucokinase interaction partner.</title>
        <authorList>
            <person name="Hofmeister-Brix A."/>
            <person name="Kollmann K."/>
            <person name="Langer S."/>
            <person name="Schultz J."/>
            <person name="Lenzen S."/>
            <person name="Baltrusch S."/>
        </authorList>
    </citation>
    <scope>FUNCTION</scope>
    <scope>INTERACTION WITH GCK</scope>
    <scope>SUBCELLULAR LOCATION</scope>
    <scope>INDUCTION</scope>
</reference>
<comment type="function">
    <text evidence="1 2">Facilitates the ubiquitin-independent proteasomal degradation of stimulus-induced transcription factors such as FOSB, EGR1, NR4A1, and IRF4 to the proteasome for degradation (By similarity). Promotes also the degradation of other substrates such as CBX4 (By similarity). Plays a role in inhibiting the activity of glucokinase GCK and both glucose-induced and basal insulin secretion (PubMed:24187134).</text>
</comment>
<comment type="subunit">
    <text evidence="2 5">Interacts with GCK; the interaction occurs preferentially at low glucose levels (PubMed:24187134). Interacts with the proteasome (By similarity).</text>
</comment>
<comment type="subcellular location">
    <subcellularLocation>
        <location evidence="5">Nucleus</location>
    </subcellularLocation>
    <subcellularLocation>
        <location evidence="5">Cytoplasm</location>
        <location evidence="5">Cytosol</location>
    </subcellularLocation>
    <subcellularLocation>
        <location evidence="1">Nucleus</location>
        <location evidence="1">Nucleolus</location>
    </subcellularLocation>
    <text evidence="1 5">Detected in the nucleus and nucleolus with no expression in the cytoplasm (By similarity). However, a later study finds expression in the nucleus and cytoplasm with no expression in the nucleolus (PubMed:24187134).</text>
</comment>
<comment type="induction">
    <text evidence="5">Down-regulated at high glucose levels of 10 and 25 mmol/liter glucose with highest expression at low glucose levels of 3 mmol/liter.</text>
</comment>
<organism evidence="8">
    <name type="scientific">Rattus norvegicus</name>
    <name type="common">Rat</name>
    <dbReference type="NCBI Taxonomy" id="10116"/>
    <lineage>
        <taxon>Eukaryota</taxon>
        <taxon>Metazoa</taxon>
        <taxon>Chordata</taxon>
        <taxon>Craniata</taxon>
        <taxon>Vertebrata</taxon>
        <taxon>Euteleostomi</taxon>
        <taxon>Mammalia</taxon>
        <taxon>Eutheria</taxon>
        <taxon>Euarchontoglires</taxon>
        <taxon>Glires</taxon>
        <taxon>Rodentia</taxon>
        <taxon>Myomorpha</taxon>
        <taxon>Muroidea</taxon>
        <taxon>Muridae</taxon>
        <taxon>Murinae</taxon>
        <taxon>Rattus</taxon>
    </lineage>
</organism>
<keyword id="KW-0963">Cytoplasm</keyword>
<keyword id="KW-0539">Nucleus</keyword>
<keyword id="KW-1185">Reference proteome</keyword>
<proteinExistence type="evidence at protein level"/>
<evidence type="ECO:0000250" key="1">
    <source>
        <dbReference type="UniProtKB" id="Q3TPJ7"/>
    </source>
</evidence>
<evidence type="ECO:0000250" key="2">
    <source>
        <dbReference type="UniProtKB" id="Q504T8"/>
    </source>
</evidence>
<evidence type="ECO:0000255" key="3">
    <source>
        <dbReference type="PROSITE-ProRule" id="PRU00214"/>
    </source>
</evidence>
<evidence type="ECO:0000256" key="4">
    <source>
        <dbReference type="SAM" id="MobiDB-lite"/>
    </source>
</evidence>
<evidence type="ECO:0000269" key="5">
    <source>
    </source>
</evidence>
<evidence type="ECO:0000303" key="6">
    <source>
    </source>
</evidence>
<evidence type="ECO:0000305" key="7"/>
<evidence type="ECO:0000312" key="8">
    <source>
        <dbReference type="Proteomes" id="UP000002494"/>
    </source>
</evidence>
<evidence type="ECO:0000312" key="9">
    <source>
        <dbReference type="RGD" id="1309629"/>
    </source>
</evidence>
<name>MIDN_RAT</name>
<gene>
    <name evidence="6 9" type="primary">Midn</name>
</gene>
<dbReference type="EMBL" id="AC141331">
    <property type="status" value="NOT_ANNOTATED_CDS"/>
    <property type="molecule type" value="Genomic_DNA"/>
</dbReference>
<dbReference type="RefSeq" id="NP_001178506.1">
    <property type="nucleotide sequence ID" value="NM_001191577.1"/>
</dbReference>
<dbReference type="RefSeq" id="XP_006240973.1">
    <property type="nucleotide sequence ID" value="XM_006240911.5"/>
</dbReference>
<dbReference type="RefSeq" id="XP_006240974.1">
    <property type="nucleotide sequence ID" value="XM_006240912.5"/>
</dbReference>
<dbReference type="SMR" id="D4AE48"/>
<dbReference type="FunCoup" id="D4AE48">
    <property type="interactions" value="2174"/>
</dbReference>
<dbReference type="STRING" id="10116.ENSRNOP00000057429"/>
<dbReference type="GlyGen" id="D4AE48">
    <property type="glycosylation" value="1 site"/>
</dbReference>
<dbReference type="iPTMnet" id="D4AE48"/>
<dbReference type="PhosphoSitePlus" id="D4AE48"/>
<dbReference type="PaxDb" id="10116-ENSRNOP00000057429"/>
<dbReference type="Ensembl" id="ENSRNOT00000060698.5">
    <property type="protein sequence ID" value="ENSRNOP00000057429.2"/>
    <property type="gene ID" value="ENSRNOG00000015434.8"/>
</dbReference>
<dbReference type="GeneID" id="314623"/>
<dbReference type="KEGG" id="rno:314623"/>
<dbReference type="UCSC" id="RGD:1309629">
    <property type="organism name" value="rat"/>
</dbReference>
<dbReference type="AGR" id="RGD:1309629"/>
<dbReference type="CTD" id="90007"/>
<dbReference type="RGD" id="1309629">
    <property type="gene designation" value="Midn"/>
</dbReference>
<dbReference type="eggNOG" id="ENOG502QTDX">
    <property type="taxonomic scope" value="Eukaryota"/>
</dbReference>
<dbReference type="GeneTree" id="ENSGT00510000049027"/>
<dbReference type="HOGENOM" id="CLU_029882_0_0_1"/>
<dbReference type="InParanoid" id="D4AE48"/>
<dbReference type="OMA" id="PSHDIGQ"/>
<dbReference type="OrthoDB" id="1916003at2759"/>
<dbReference type="PhylomeDB" id="D4AE48"/>
<dbReference type="TreeFam" id="TF329735"/>
<dbReference type="PRO" id="PR:D4AE48"/>
<dbReference type="Proteomes" id="UP000002494">
    <property type="component" value="Chromosome 7"/>
</dbReference>
<dbReference type="Bgee" id="ENSRNOG00000015434">
    <property type="expression patterns" value="Expressed in thymus and 19 other cell types or tissues"/>
</dbReference>
<dbReference type="GO" id="GO:0005737">
    <property type="term" value="C:cytoplasm"/>
    <property type="evidence" value="ECO:0000266"/>
    <property type="project" value="RGD"/>
</dbReference>
<dbReference type="GO" id="GO:0005829">
    <property type="term" value="C:cytosol"/>
    <property type="evidence" value="ECO:0000266"/>
    <property type="project" value="RGD"/>
</dbReference>
<dbReference type="GO" id="GO:0005730">
    <property type="term" value="C:nucleolus"/>
    <property type="evidence" value="ECO:0000266"/>
    <property type="project" value="RGD"/>
</dbReference>
<dbReference type="GO" id="GO:0005634">
    <property type="term" value="C:nucleus"/>
    <property type="evidence" value="ECO:0000266"/>
    <property type="project" value="RGD"/>
</dbReference>
<dbReference type="GO" id="GO:0019900">
    <property type="term" value="F:kinase binding"/>
    <property type="evidence" value="ECO:0000353"/>
    <property type="project" value="MGI"/>
</dbReference>
<dbReference type="GO" id="GO:0060090">
    <property type="term" value="F:molecular adaptor activity"/>
    <property type="evidence" value="ECO:0000266"/>
    <property type="project" value="RGD"/>
</dbReference>
<dbReference type="GO" id="GO:0033132">
    <property type="term" value="P:negative regulation of glucokinase activity"/>
    <property type="evidence" value="ECO:0000314"/>
    <property type="project" value="MGI"/>
</dbReference>
<dbReference type="GO" id="GO:0046676">
    <property type="term" value="P:negative regulation of insulin secretion"/>
    <property type="evidence" value="ECO:0000314"/>
    <property type="project" value="MGI"/>
</dbReference>
<dbReference type="GO" id="GO:0010499">
    <property type="term" value="P:proteasomal ubiquitin-independent protein catabolic process"/>
    <property type="evidence" value="ECO:0000266"/>
    <property type="project" value="RGD"/>
</dbReference>
<dbReference type="CDD" id="cd01804">
    <property type="entry name" value="Ubl_midnolin"/>
    <property type="match status" value="1"/>
</dbReference>
<dbReference type="FunFam" id="3.10.20.90:FF:000180">
    <property type="entry name" value="midnolin isoform X1"/>
    <property type="match status" value="1"/>
</dbReference>
<dbReference type="Gene3D" id="3.10.20.90">
    <property type="entry name" value="Phosphatidylinositol 3-kinase Catalytic Subunit, Chain A, domain 1"/>
    <property type="match status" value="1"/>
</dbReference>
<dbReference type="InterPro" id="IPR039336">
    <property type="entry name" value="Midnolin"/>
</dbReference>
<dbReference type="InterPro" id="IPR000626">
    <property type="entry name" value="Ubiquitin-like_dom"/>
</dbReference>
<dbReference type="InterPro" id="IPR029071">
    <property type="entry name" value="Ubiquitin-like_domsf"/>
</dbReference>
<dbReference type="PANTHER" id="PTHR23010">
    <property type="entry name" value="MIDNOLIN"/>
    <property type="match status" value="1"/>
</dbReference>
<dbReference type="PANTHER" id="PTHR23010:SF1">
    <property type="entry name" value="MIDNOLIN"/>
    <property type="match status" value="1"/>
</dbReference>
<dbReference type="Pfam" id="PF00240">
    <property type="entry name" value="ubiquitin"/>
    <property type="match status" value="1"/>
</dbReference>
<dbReference type="SMART" id="SM00213">
    <property type="entry name" value="UBQ"/>
    <property type="match status" value="1"/>
</dbReference>
<dbReference type="SUPFAM" id="SSF54236">
    <property type="entry name" value="Ubiquitin-like"/>
    <property type="match status" value="1"/>
</dbReference>
<dbReference type="PROSITE" id="PS50053">
    <property type="entry name" value="UBIQUITIN_2"/>
    <property type="match status" value="1"/>
</dbReference>
<accession>D4AE48</accession>
<protein>
    <recommendedName>
        <fullName evidence="6">Midnolin</fullName>
    </recommendedName>
    <alternativeName>
        <fullName evidence="1">Midbrain nucleolar protein</fullName>
    </alternativeName>
</protein>
<sequence>MEPQPGGARSCRRGAPGGACELSTTAESAAPMSLAIHSTTGTRYDLSVPHDETVEGLRKRLSQRLKVPKERLALLHKDTRLSSGKLQEFGVGDGSKLTLVPTVEAGLMSQASRPEQSVMQALESLTETQPPATPGPGRAAGGGFRKYRLILFKRPWHRQGPQSPERGGERPQVSDFLSGRSPLTLALRVGDHMMFVQLQLAAQHAPLQHRHVLAAAAAAAAAARGDSSIATPVSSPCRPVSSAARVPPVSSSPSSPVSPSPVTAGTFQSHAASTTCPEQTDCSPPASSNTTSTPGSSPTPRSRKPGAVIESFVNHAPGVFSGTFSGTLHPNCQDSSGRPRRDIGTILQILNDLLSATRHYQGMPASLTQLRCHAQCSPASPAPDLTPKTTSCEKLATPSLLQGQSQIRMCKPPGDRLRQTENRATRCKVERLQLLLQQKRLRRKARRDARGPYHWTPSRKAGRSDSSSSGGGGSPSEATGLGLDFEDSVWKPEVNPDIQSEFVVA</sequence>